<comment type="function">
    <text evidence="1">Catalyzes the decarboxylation of orotidine 5'-monophosphate (OMP) to uridine 5'-monophosphate (UMP).</text>
</comment>
<comment type="catalytic activity">
    <reaction evidence="1">
        <text>orotidine 5'-phosphate + H(+) = UMP + CO2</text>
        <dbReference type="Rhea" id="RHEA:11596"/>
        <dbReference type="ChEBI" id="CHEBI:15378"/>
        <dbReference type="ChEBI" id="CHEBI:16526"/>
        <dbReference type="ChEBI" id="CHEBI:57538"/>
        <dbReference type="ChEBI" id="CHEBI:57865"/>
        <dbReference type="EC" id="4.1.1.23"/>
    </reaction>
</comment>
<comment type="pathway">
    <text evidence="1">Pyrimidine metabolism; UMP biosynthesis via de novo pathway; UMP from orotate: step 2/2.</text>
</comment>
<comment type="subunit">
    <text evidence="1">Homodimer.</text>
</comment>
<comment type="similarity">
    <text evidence="1">Belongs to the OMP decarboxylase family. Type 1 subfamily.</text>
</comment>
<proteinExistence type="inferred from homology"/>
<dbReference type="EC" id="4.1.1.23" evidence="1"/>
<dbReference type="EMBL" id="BA000011">
    <property type="protein sequence ID" value="BAB59170.1"/>
    <property type="molecule type" value="Genomic_DNA"/>
</dbReference>
<dbReference type="RefSeq" id="WP_156769028.1">
    <property type="nucleotide sequence ID" value="NC_002689.2"/>
</dbReference>
<dbReference type="SMR" id="Q97CS3"/>
<dbReference type="STRING" id="273116.gene:9380793"/>
<dbReference type="PaxDb" id="273116-14324242"/>
<dbReference type="GeneID" id="1441514"/>
<dbReference type="KEGG" id="tvo:TVG0029151"/>
<dbReference type="eggNOG" id="arCOG00081">
    <property type="taxonomic scope" value="Archaea"/>
</dbReference>
<dbReference type="HOGENOM" id="CLU_067069_2_0_2"/>
<dbReference type="OrthoDB" id="94124at2157"/>
<dbReference type="PhylomeDB" id="Q97CS3"/>
<dbReference type="UniPathway" id="UPA00070">
    <property type="reaction ID" value="UER00120"/>
</dbReference>
<dbReference type="Proteomes" id="UP000001017">
    <property type="component" value="Chromosome"/>
</dbReference>
<dbReference type="GO" id="GO:0005829">
    <property type="term" value="C:cytosol"/>
    <property type="evidence" value="ECO:0007669"/>
    <property type="project" value="TreeGrafter"/>
</dbReference>
<dbReference type="GO" id="GO:0004590">
    <property type="term" value="F:orotidine-5'-phosphate decarboxylase activity"/>
    <property type="evidence" value="ECO:0007669"/>
    <property type="project" value="UniProtKB-UniRule"/>
</dbReference>
<dbReference type="GO" id="GO:0006207">
    <property type="term" value="P:'de novo' pyrimidine nucleobase biosynthetic process"/>
    <property type="evidence" value="ECO:0007669"/>
    <property type="project" value="InterPro"/>
</dbReference>
<dbReference type="GO" id="GO:0044205">
    <property type="term" value="P:'de novo' UMP biosynthetic process"/>
    <property type="evidence" value="ECO:0007669"/>
    <property type="project" value="UniProtKB-UniRule"/>
</dbReference>
<dbReference type="CDD" id="cd04725">
    <property type="entry name" value="OMP_decarboxylase_like"/>
    <property type="match status" value="1"/>
</dbReference>
<dbReference type="Gene3D" id="3.20.20.70">
    <property type="entry name" value="Aldolase class I"/>
    <property type="match status" value="1"/>
</dbReference>
<dbReference type="HAMAP" id="MF_01200_A">
    <property type="entry name" value="OMPdecase_type1_A"/>
    <property type="match status" value="1"/>
</dbReference>
<dbReference type="InterPro" id="IPR013785">
    <property type="entry name" value="Aldolase_TIM"/>
</dbReference>
<dbReference type="InterPro" id="IPR014732">
    <property type="entry name" value="OMPdecase"/>
</dbReference>
<dbReference type="InterPro" id="IPR047595">
    <property type="entry name" value="OMPdecase_arc"/>
</dbReference>
<dbReference type="InterPro" id="IPR018089">
    <property type="entry name" value="OMPdecase_AS"/>
</dbReference>
<dbReference type="InterPro" id="IPR001754">
    <property type="entry name" value="OMPdeCOase_dom"/>
</dbReference>
<dbReference type="InterPro" id="IPR011060">
    <property type="entry name" value="RibuloseP-bd_barrel"/>
</dbReference>
<dbReference type="NCBIfam" id="NF010386">
    <property type="entry name" value="PRK13813.1"/>
    <property type="match status" value="1"/>
</dbReference>
<dbReference type="NCBIfam" id="TIGR01740">
    <property type="entry name" value="pyrF"/>
    <property type="match status" value="1"/>
</dbReference>
<dbReference type="PANTHER" id="PTHR32119">
    <property type="entry name" value="OROTIDINE 5'-PHOSPHATE DECARBOXYLASE"/>
    <property type="match status" value="1"/>
</dbReference>
<dbReference type="PANTHER" id="PTHR32119:SF2">
    <property type="entry name" value="OROTIDINE 5'-PHOSPHATE DECARBOXYLASE"/>
    <property type="match status" value="1"/>
</dbReference>
<dbReference type="Pfam" id="PF00215">
    <property type="entry name" value="OMPdecase"/>
    <property type="match status" value="1"/>
</dbReference>
<dbReference type="SMART" id="SM00934">
    <property type="entry name" value="OMPdecase"/>
    <property type="match status" value="1"/>
</dbReference>
<dbReference type="SUPFAM" id="SSF51366">
    <property type="entry name" value="Ribulose-phoshate binding barrel"/>
    <property type="match status" value="1"/>
</dbReference>
<dbReference type="PROSITE" id="PS00156">
    <property type="entry name" value="OMPDECASE"/>
    <property type="match status" value="1"/>
</dbReference>
<name>PYRF_THEVO</name>
<sequence length="219" mass="24069">MDKRIIVALDVKEKKKAIDIAESLSDIVFAFKINWPLVLYSSPEVIGEISQYGKVICDFKVADIPYTNSLITERVRDLGAWGIISHSFLGEESLKSVVNAAKGMHVFSVVAMSHPGSDMINSNAMQLMKLSIECGVYGFVAPANKIDDLRMIRSATDRVIISPGIGAQGGDPYTAVLNGSDYLIVGRSVYESDKPELEVSKLQQTAERAIEDRERLKNS</sequence>
<gene>
    <name evidence="1" type="primary">pyrF</name>
    <name type="ordered locus">TV0028</name>
    <name type="ORF">TVG0029151</name>
</gene>
<accession>Q97CS3</accession>
<organism>
    <name type="scientific">Thermoplasma volcanium (strain ATCC 51530 / DSM 4299 / JCM 9571 / NBRC 15438 / GSS1)</name>
    <dbReference type="NCBI Taxonomy" id="273116"/>
    <lineage>
        <taxon>Archaea</taxon>
        <taxon>Methanobacteriati</taxon>
        <taxon>Thermoplasmatota</taxon>
        <taxon>Thermoplasmata</taxon>
        <taxon>Thermoplasmatales</taxon>
        <taxon>Thermoplasmataceae</taxon>
        <taxon>Thermoplasma</taxon>
    </lineage>
</organism>
<reference key="1">
    <citation type="journal article" date="2000" name="Proc. Natl. Acad. Sci. U.S.A.">
        <title>Archaeal adaptation to higher temperatures revealed by genomic sequence of Thermoplasma volcanium.</title>
        <authorList>
            <person name="Kawashima T."/>
            <person name="Amano N."/>
            <person name="Koike H."/>
            <person name="Makino S."/>
            <person name="Higuchi S."/>
            <person name="Kawashima-Ohya Y."/>
            <person name="Watanabe K."/>
            <person name="Yamazaki M."/>
            <person name="Kanehori K."/>
            <person name="Kawamoto T."/>
            <person name="Nunoshiba T."/>
            <person name="Yamamoto Y."/>
            <person name="Aramaki H."/>
            <person name="Makino K."/>
            <person name="Suzuki M."/>
        </authorList>
    </citation>
    <scope>NUCLEOTIDE SEQUENCE [LARGE SCALE GENOMIC DNA]</scope>
    <source>
        <strain>ATCC 51530 / DSM 4299 / JCM 9571 / NBRC 15438 / GSS1</strain>
    </source>
</reference>
<keyword id="KW-0210">Decarboxylase</keyword>
<keyword id="KW-0456">Lyase</keyword>
<keyword id="KW-0665">Pyrimidine biosynthesis</keyword>
<protein>
    <recommendedName>
        <fullName evidence="1">Orotidine 5'-phosphate decarboxylase</fullName>
        <ecNumber evidence="1">4.1.1.23</ecNumber>
    </recommendedName>
    <alternativeName>
        <fullName evidence="1">OMP decarboxylase</fullName>
        <shortName evidence="1">OMPDCase</shortName>
        <shortName evidence="1">OMPdecase</shortName>
    </alternativeName>
</protein>
<evidence type="ECO:0000255" key="1">
    <source>
        <dbReference type="HAMAP-Rule" id="MF_01200"/>
    </source>
</evidence>
<feature type="chain" id="PRO_0000134621" description="Orotidine 5'-phosphate decarboxylase">
    <location>
        <begin position="1"/>
        <end position="219"/>
    </location>
</feature>
<feature type="active site" description="Proton donor" evidence="1">
    <location>
        <position position="60"/>
    </location>
</feature>
<feature type="binding site" evidence="1">
    <location>
        <position position="10"/>
    </location>
    <ligand>
        <name>substrate</name>
    </ligand>
</feature>
<feature type="binding site" evidence="1">
    <location>
        <position position="32"/>
    </location>
    <ligand>
        <name>substrate</name>
    </ligand>
</feature>
<feature type="binding site" evidence="1">
    <location>
        <begin position="58"/>
        <end position="67"/>
    </location>
    <ligand>
        <name>substrate</name>
    </ligand>
</feature>
<feature type="binding site" evidence="1">
    <location>
        <position position="113"/>
    </location>
    <ligand>
        <name>substrate</name>
    </ligand>
</feature>
<feature type="binding site" evidence="1">
    <location>
        <begin position="163"/>
        <end position="173"/>
    </location>
    <ligand>
        <name>substrate</name>
    </ligand>
</feature>
<feature type="binding site" evidence="1">
    <location>
        <position position="186"/>
    </location>
    <ligand>
        <name>substrate</name>
    </ligand>
</feature>
<feature type="binding site" evidence="1">
    <location>
        <position position="187"/>
    </location>
    <ligand>
        <name>substrate</name>
    </ligand>
</feature>